<protein>
    <recommendedName>
        <fullName evidence="1">3-deoxy-manno-octulosonate cytidylyltransferase</fullName>
        <ecNumber evidence="1">2.7.7.38</ecNumber>
    </recommendedName>
    <alternativeName>
        <fullName evidence="1">CMP-2-keto-3-deoxyoctulosonic acid synthase</fullName>
        <shortName evidence="1">CKS</shortName>
        <shortName evidence="1">CMP-KDO synthase</shortName>
    </alternativeName>
</protein>
<feature type="chain" id="PRO_1000091876" description="3-deoxy-manno-octulosonate cytidylyltransferase">
    <location>
        <begin position="1"/>
        <end position="243"/>
    </location>
</feature>
<sequence length="243" mass="27450">MIIIPARLKSSRFENKVLEDIFGLPMVVRCAKNANLVDECVVACDDESIMQTCQKFRIKAVLTSKHHNSGTERCLEAARILGLKNDERVLNLQGDEPFLEKEVILALLEATQNAPFMATCAKVIDEEQAKSPNLVKVVLDSQNNALYFSRSLIPVLRDFDAKRQTPLLGHIGIYGFHNKEILEELCALKPCVLEEIEKLEQLRALYYQKKIAVKIVQSQSVGIDTKEDLQNALKIFSPNLLER</sequence>
<organism>
    <name type="scientific">Helicobacter pylori (strain P12)</name>
    <dbReference type="NCBI Taxonomy" id="570508"/>
    <lineage>
        <taxon>Bacteria</taxon>
        <taxon>Pseudomonadati</taxon>
        <taxon>Campylobacterota</taxon>
        <taxon>Epsilonproteobacteria</taxon>
        <taxon>Campylobacterales</taxon>
        <taxon>Helicobacteraceae</taxon>
        <taxon>Helicobacter</taxon>
    </lineage>
</organism>
<evidence type="ECO:0000255" key="1">
    <source>
        <dbReference type="HAMAP-Rule" id="MF_00057"/>
    </source>
</evidence>
<comment type="function">
    <text evidence="1">Activates KDO (a required 8-carbon sugar) for incorporation into bacterial lipopolysaccharide in Gram-negative bacteria.</text>
</comment>
<comment type="catalytic activity">
    <reaction evidence="1">
        <text>3-deoxy-alpha-D-manno-oct-2-ulosonate + CTP = CMP-3-deoxy-beta-D-manno-octulosonate + diphosphate</text>
        <dbReference type="Rhea" id="RHEA:23448"/>
        <dbReference type="ChEBI" id="CHEBI:33019"/>
        <dbReference type="ChEBI" id="CHEBI:37563"/>
        <dbReference type="ChEBI" id="CHEBI:85986"/>
        <dbReference type="ChEBI" id="CHEBI:85987"/>
        <dbReference type="EC" id="2.7.7.38"/>
    </reaction>
</comment>
<comment type="pathway">
    <text evidence="1">Nucleotide-sugar biosynthesis; CMP-3-deoxy-D-manno-octulosonate biosynthesis; CMP-3-deoxy-D-manno-octulosonate from 3-deoxy-D-manno-octulosonate and CTP: step 1/1.</text>
</comment>
<comment type="pathway">
    <text evidence="1">Bacterial outer membrane biogenesis; lipopolysaccharide biosynthesis.</text>
</comment>
<comment type="subcellular location">
    <subcellularLocation>
        <location evidence="1">Cytoplasm</location>
    </subcellularLocation>
</comment>
<comment type="similarity">
    <text evidence="1">Belongs to the KdsB family.</text>
</comment>
<accession>B6JKG1</accession>
<name>KDSB_HELP2</name>
<dbReference type="EC" id="2.7.7.38" evidence="1"/>
<dbReference type="EMBL" id="CP001217">
    <property type="protein sequence ID" value="ACJ07389.1"/>
    <property type="molecule type" value="Genomic_DNA"/>
</dbReference>
<dbReference type="SMR" id="B6JKG1"/>
<dbReference type="KEGG" id="hpp:HPP12_0230"/>
<dbReference type="HOGENOM" id="CLU_065038_0_1_7"/>
<dbReference type="UniPathway" id="UPA00030"/>
<dbReference type="UniPathway" id="UPA00358">
    <property type="reaction ID" value="UER00476"/>
</dbReference>
<dbReference type="Proteomes" id="UP000008198">
    <property type="component" value="Chromosome"/>
</dbReference>
<dbReference type="GO" id="GO:0005829">
    <property type="term" value="C:cytosol"/>
    <property type="evidence" value="ECO:0007669"/>
    <property type="project" value="TreeGrafter"/>
</dbReference>
<dbReference type="GO" id="GO:0008690">
    <property type="term" value="F:3-deoxy-manno-octulosonate cytidylyltransferase activity"/>
    <property type="evidence" value="ECO:0007669"/>
    <property type="project" value="UniProtKB-UniRule"/>
</dbReference>
<dbReference type="GO" id="GO:0033468">
    <property type="term" value="P:CMP-keto-3-deoxy-D-manno-octulosonic acid biosynthetic process"/>
    <property type="evidence" value="ECO:0007669"/>
    <property type="project" value="UniProtKB-UniRule"/>
</dbReference>
<dbReference type="GO" id="GO:0009103">
    <property type="term" value="P:lipopolysaccharide biosynthetic process"/>
    <property type="evidence" value="ECO:0007669"/>
    <property type="project" value="UniProtKB-UniRule"/>
</dbReference>
<dbReference type="CDD" id="cd02517">
    <property type="entry name" value="CMP-KDO-Synthetase"/>
    <property type="match status" value="1"/>
</dbReference>
<dbReference type="FunFam" id="3.90.550.10:FF:000222">
    <property type="entry name" value="3-deoxy-manno-octulosonate cytidylyltransferase"/>
    <property type="match status" value="1"/>
</dbReference>
<dbReference type="Gene3D" id="3.90.550.10">
    <property type="entry name" value="Spore Coat Polysaccharide Biosynthesis Protein SpsA, Chain A"/>
    <property type="match status" value="1"/>
</dbReference>
<dbReference type="HAMAP" id="MF_00057">
    <property type="entry name" value="KdsB"/>
    <property type="match status" value="1"/>
</dbReference>
<dbReference type="InterPro" id="IPR003329">
    <property type="entry name" value="Cytidylyl_trans"/>
</dbReference>
<dbReference type="InterPro" id="IPR004528">
    <property type="entry name" value="KdsB"/>
</dbReference>
<dbReference type="InterPro" id="IPR029044">
    <property type="entry name" value="Nucleotide-diphossugar_trans"/>
</dbReference>
<dbReference type="NCBIfam" id="TIGR00466">
    <property type="entry name" value="kdsB"/>
    <property type="match status" value="1"/>
</dbReference>
<dbReference type="NCBIfam" id="NF003952">
    <property type="entry name" value="PRK05450.1-5"/>
    <property type="match status" value="1"/>
</dbReference>
<dbReference type="PANTHER" id="PTHR42866">
    <property type="entry name" value="3-DEOXY-MANNO-OCTULOSONATE CYTIDYLYLTRANSFERASE"/>
    <property type="match status" value="1"/>
</dbReference>
<dbReference type="PANTHER" id="PTHR42866:SF2">
    <property type="entry name" value="3-DEOXY-MANNO-OCTULOSONATE CYTIDYLYLTRANSFERASE, MITOCHONDRIAL"/>
    <property type="match status" value="1"/>
</dbReference>
<dbReference type="Pfam" id="PF02348">
    <property type="entry name" value="CTP_transf_3"/>
    <property type="match status" value="1"/>
</dbReference>
<dbReference type="SUPFAM" id="SSF53448">
    <property type="entry name" value="Nucleotide-diphospho-sugar transferases"/>
    <property type="match status" value="1"/>
</dbReference>
<reference key="1">
    <citation type="submission" date="2008-10" db="EMBL/GenBank/DDBJ databases">
        <title>The complete genome sequence of Helicobacter pylori strain P12.</title>
        <authorList>
            <person name="Fischer W."/>
            <person name="Windhager L."/>
            <person name="Karnholz A."/>
            <person name="Zeiller M."/>
            <person name="Zimmer R."/>
            <person name="Haas R."/>
        </authorList>
    </citation>
    <scope>NUCLEOTIDE SEQUENCE [LARGE SCALE GENOMIC DNA]</scope>
    <source>
        <strain>P12</strain>
    </source>
</reference>
<keyword id="KW-0963">Cytoplasm</keyword>
<keyword id="KW-0448">Lipopolysaccharide biosynthesis</keyword>
<keyword id="KW-0548">Nucleotidyltransferase</keyword>
<keyword id="KW-0808">Transferase</keyword>
<gene>
    <name evidence="1" type="primary">kdsB</name>
    <name type="ordered locus">HPP12_0230</name>
</gene>
<proteinExistence type="inferred from homology"/>